<keyword id="KW-0021">Allosteric enzyme</keyword>
<keyword id="KW-0067">ATP-binding</keyword>
<keyword id="KW-0112">Calmodulin-binding</keyword>
<keyword id="KW-0963">Cytoplasm</keyword>
<keyword id="KW-0217">Developmental protein</keyword>
<keyword id="KW-0418">Kinase</keyword>
<keyword id="KW-0460">Magnesium</keyword>
<keyword id="KW-0479">Metal-binding</keyword>
<keyword id="KW-0547">Nucleotide-binding</keyword>
<keyword id="KW-0539">Nucleus</keyword>
<keyword id="KW-0597">Phosphoprotein</keyword>
<keyword id="KW-1185">Reference proteome</keyword>
<keyword id="KW-0723">Serine/threonine-protein kinase</keyword>
<keyword id="KW-0808">Transferase</keyword>
<organism>
    <name type="scientific">Caenorhabditis briggsae</name>
    <dbReference type="NCBI Taxonomy" id="6238"/>
    <lineage>
        <taxon>Eukaryota</taxon>
        <taxon>Metazoa</taxon>
        <taxon>Ecdysozoa</taxon>
        <taxon>Nematoda</taxon>
        <taxon>Chromadorea</taxon>
        <taxon>Rhabditida</taxon>
        <taxon>Rhabditina</taxon>
        <taxon>Rhabditomorpha</taxon>
        <taxon>Rhabditoidea</taxon>
        <taxon>Rhabditidae</taxon>
        <taxon>Peloderinae</taxon>
        <taxon>Caenorhabditis</taxon>
    </lineage>
</organism>
<dbReference type="EC" id="2.7.11.17" evidence="3"/>
<dbReference type="EMBL" id="HE601100">
    <property type="protein sequence ID" value="CAP28235.2"/>
    <property type="molecule type" value="Genomic_DNA"/>
</dbReference>
<dbReference type="SMR" id="A8X6H4"/>
<dbReference type="FunCoup" id="A8X6H4">
    <property type="interactions" value="702"/>
</dbReference>
<dbReference type="STRING" id="6238.A8X6H4"/>
<dbReference type="WormBase" id="CBG08406">
    <property type="protein sequence ID" value="CBP46723"/>
    <property type="gene ID" value="WBGene00030202"/>
    <property type="gene designation" value="Cbr-cmk-1"/>
</dbReference>
<dbReference type="eggNOG" id="KOG0032">
    <property type="taxonomic scope" value="Eukaryota"/>
</dbReference>
<dbReference type="HOGENOM" id="CLU_000288_63_0_1"/>
<dbReference type="InParanoid" id="A8X6H4"/>
<dbReference type="OMA" id="HDWFESR"/>
<dbReference type="Proteomes" id="UP000008549">
    <property type="component" value="Unassembled WGS sequence"/>
</dbReference>
<dbReference type="GO" id="GO:0005737">
    <property type="term" value="C:cytoplasm"/>
    <property type="evidence" value="ECO:0000318"/>
    <property type="project" value="GO_Central"/>
</dbReference>
<dbReference type="GO" id="GO:0005634">
    <property type="term" value="C:nucleus"/>
    <property type="evidence" value="ECO:0007669"/>
    <property type="project" value="UniProtKB-SubCell"/>
</dbReference>
<dbReference type="GO" id="GO:0005524">
    <property type="term" value="F:ATP binding"/>
    <property type="evidence" value="ECO:0007669"/>
    <property type="project" value="UniProtKB-KW"/>
</dbReference>
<dbReference type="GO" id="GO:0004683">
    <property type="term" value="F:calcium/calmodulin-dependent protein kinase activity"/>
    <property type="evidence" value="ECO:0000318"/>
    <property type="project" value="GO_Central"/>
</dbReference>
<dbReference type="GO" id="GO:0005516">
    <property type="term" value="F:calmodulin binding"/>
    <property type="evidence" value="ECO:0000318"/>
    <property type="project" value="GO_Central"/>
</dbReference>
<dbReference type="GO" id="GO:0046872">
    <property type="term" value="F:metal ion binding"/>
    <property type="evidence" value="ECO:0007669"/>
    <property type="project" value="UniProtKB-KW"/>
</dbReference>
<dbReference type="GO" id="GO:0106310">
    <property type="term" value="F:protein serine kinase activity"/>
    <property type="evidence" value="ECO:0007669"/>
    <property type="project" value="RHEA"/>
</dbReference>
<dbReference type="GO" id="GO:0007165">
    <property type="term" value="P:signal transduction"/>
    <property type="evidence" value="ECO:0000318"/>
    <property type="project" value="GO_Central"/>
</dbReference>
<dbReference type="CDD" id="cd14083">
    <property type="entry name" value="STKc_CaMKI"/>
    <property type="match status" value="1"/>
</dbReference>
<dbReference type="FunFam" id="3.30.200.20:FF:000531">
    <property type="entry name" value="Calcium/calmodulin-dependent protein kinase type"/>
    <property type="match status" value="1"/>
</dbReference>
<dbReference type="FunFam" id="1.10.510.10:FF:000026">
    <property type="entry name" value="Calcium/calmodulin-dependent protein kinase type 1"/>
    <property type="match status" value="1"/>
</dbReference>
<dbReference type="Gene3D" id="3.30.200.20">
    <property type="entry name" value="Phosphorylase Kinase, domain 1"/>
    <property type="match status" value="1"/>
</dbReference>
<dbReference type="Gene3D" id="1.10.510.10">
    <property type="entry name" value="Transferase(Phosphotransferase) domain 1"/>
    <property type="match status" value="1"/>
</dbReference>
<dbReference type="InterPro" id="IPR011009">
    <property type="entry name" value="Kinase-like_dom_sf"/>
</dbReference>
<dbReference type="InterPro" id="IPR000719">
    <property type="entry name" value="Prot_kinase_dom"/>
</dbReference>
<dbReference type="InterPro" id="IPR017441">
    <property type="entry name" value="Protein_kinase_ATP_BS"/>
</dbReference>
<dbReference type="InterPro" id="IPR008271">
    <property type="entry name" value="Ser/Thr_kinase_AS"/>
</dbReference>
<dbReference type="PANTHER" id="PTHR24347">
    <property type="entry name" value="SERINE/THREONINE-PROTEIN KINASE"/>
    <property type="match status" value="1"/>
</dbReference>
<dbReference type="Pfam" id="PF00069">
    <property type="entry name" value="Pkinase"/>
    <property type="match status" value="1"/>
</dbReference>
<dbReference type="SMART" id="SM00220">
    <property type="entry name" value="S_TKc"/>
    <property type="match status" value="1"/>
</dbReference>
<dbReference type="SUPFAM" id="SSF56112">
    <property type="entry name" value="Protein kinase-like (PK-like)"/>
    <property type="match status" value="1"/>
</dbReference>
<dbReference type="PROSITE" id="PS00107">
    <property type="entry name" value="PROTEIN_KINASE_ATP"/>
    <property type="match status" value="1"/>
</dbReference>
<dbReference type="PROSITE" id="PS50011">
    <property type="entry name" value="PROTEIN_KINASE_DOM"/>
    <property type="match status" value="1"/>
</dbReference>
<dbReference type="PROSITE" id="PS00108">
    <property type="entry name" value="PROTEIN_KINASE_ST"/>
    <property type="match status" value="1"/>
</dbReference>
<protein>
    <recommendedName>
        <fullName evidence="3">Calcium/calmodulin-dependent protein kinase type 1</fullName>
        <ecNumber evidence="3">2.7.11.17</ecNumber>
    </recommendedName>
    <alternativeName>
        <fullName evidence="3">CaM kinase I</fullName>
        <shortName evidence="3">CaM-KI</shortName>
    </alternativeName>
</protein>
<feature type="chain" id="PRO_0000395334" description="Calcium/calmodulin-dependent protein kinase type 1">
    <location>
        <begin position="1"/>
        <end position="356"/>
    </location>
</feature>
<feature type="domain" description="Protein kinase" evidence="5">
    <location>
        <begin position="22"/>
        <end position="278"/>
    </location>
</feature>
<feature type="region of interest" description="Autoinhibitory domain" evidence="2">
    <location>
        <begin position="278"/>
        <end position="318"/>
    </location>
</feature>
<feature type="region of interest" description="Calmodulin-binding" evidence="2">
    <location>
        <begin position="298"/>
        <end position="319"/>
    </location>
</feature>
<feature type="short sequence motif" description="Nuclear localization signal" evidence="3">
    <location>
        <begin position="2"/>
        <end position="7"/>
    </location>
</feature>
<feature type="active site" description="Proton acceptor" evidence="1 5 6">
    <location>
        <position position="144"/>
    </location>
</feature>
<feature type="binding site" evidence="1 5">
    <location>
        <begin position="28"/>
        <end position="36"/>
    </location>
    <ligand>
        <name>ATP</name>
        <dbReference type="ChEBI" id="CHEBI:30616"/>
    </ligand>
</feature>
<feature type="binding site" evidence="1 5">
    <location>
        <position position="52"/>
    </location>
    <ligand>
        <name>ATP</name>
        <dbReference type="ChEBI" id="CHEBI:30616"/>
    </ligand>
</feature>
<feature type="modified residue" description="Phosphothreonine; by ckk-1" evidence="3">
    <location>
        <position position="179"/>
    </location>
</feature>
<proteinExistence type="inferred from homology"/>
<evidence type="ECO:0000250" key="1">
    <source>
        <dbReference type="UniProtKB" id="P28523"/>
    </source>
</evidence>
<evidence type="ECO:0000250" key="2">
    <source>
        <dbReference type="UniProtKB" id="Q63450"/>
    </source>
</evidence>
<evidence type="ECO:0000250" key="3">
    <source>
        <dbReference type="UniProtKB" id="Q9TXJ0"/>
    </source>
</evidence>
<evidence type="ECO:0000255" key="4"/>
<evidence type="ECO:0000255" key="5">
    <source>
        <dbReference type="PROSITE-ProRule" id="PRU00159"/>
    </source>
</evidence>
<evidence type="ECO:0000255" key="6">
    <source>
        <dbReference type="PROSITE-ProRule" id="PRU10027"/>
    </source>
</evidence>
<accession>A8X6H4</accession>
<reference key="1">
    <citation type="journal article" date="2003" name="PLoS Biol.">
        <title>The genome sequence of Caenorhabditis briggsae: a platform for comparative genomics.</title>
        <authorList>
            <person name="Stein L.D."/>
            <person name="Bao Z."/>
            <person name="Blasiar D."/>
            <person name="Blumenthal T."/>
            <person name="Brent M.R."/>
            <person name="Chen N."/>
            <person name="Chinwalla A."/>
            <person name="Clarke L."/>
            <person name="Clee C."/>
            <person name="Coghlan A."/>
            <person name="Coulson A."/>
            <person name="D'Eustachio P."/>
            <person name="Fitch D.H.A."/>
            <person name="Fulton L.A."/>
            <person name="Fulton R.E."/>
            <person name="Griffiths-Jones S."/>
            <person name="Harris T.W."/>
            <person name="Hillier L.W."/>
            <person name="Kamath R."/>
            <person name="Kuwabara P.E."/>
            <person name="Mardis E.R."/>
            <person name="Marra M.A."/>
            <person name="Miner T.L."/>
            <person name="Minx P."/>
            <person name="Mullikin J.C."/>
            <person name="Plumb R.W."/>
            <person name="Rogers J."/>
            <person name="Schein J.E."/>
            <person name="Sohrmann M."/>
            <person name="Spieth J."/>
            <person name="Stajich J.E."/>
            <person name="Wei C."/>
            <person name="Willey D."/>
            <person name="Wilson R.K."/>
            <person name="Durbin R.M."/>
            <person name="Waterston R.H."/>
        </authorList>
    </citation>
    <scope>NUCLEOTIDE SEQUENCE [LARGE SCALE GENOMIC DNA]</scope>
    <source>
        <strain>AF16</strain>
    </source>
</reference>
<name>CMK1_CAEBR</name>
<sequence length="356" mass="40532">MPLFKRRDVNTPAPTSSIREKYDFRDVLGTGAFSKVFLAESKTDVGQLYAVKCIDKKALKGKEESLENEIKVLRKLRHNNIVQLFETYDEKQFVYLVMELVTGGELFDRIVAKGSYTEQDASNLIRQVLEAVSFMHDNGVVHRDLKPENLLYYNQDEDSKIMISDFGLSKTEDSGVMATACGTPGYVAPEVLQQKPYGKAVDVWSIGVIAYILLCGYPPFYDESDANLFAQIIKGEYEFDAPYWDQISDSAKDFISHLMCCDPEMRFTCQSALEHPWISGNTAYTHDIHRTVAVHLKKSLAKRNWKKAFNAAAAIRQLQLLRLSPIATAFRNKRPNSNQRLQLPNVLVFQYFCKIP</sequence>
<comment type="function">
    <text evidence="2">Calcium/calmodulin-dependent protein kinase that operates in the calcium-triggered CaMKK-CaMK1 signaling cascade which results in transcriptional activation. Transcriptional activation occurs at least in part through phosphorylation of crh-1. Regulates gene expression, sensory morphology, and function of the AFD thermosensory neurons. Involved in long-term adaptation of AFD neurons to temperatures warmer than the initial acclimatized cultivation temperature. Acts in the FLP thermal nociceptors to moderate the responsiveness to noxious heat and controls neuropeptide release from FLP neurons in response to temperature elevations. Regulates the dauer decision, the decision of the larvae to enter into the alternative stress-resistant and long-lived dauer developmental stage, based on the feeding state, primarily in the AWC sensory neurons. Acts non cell-autonomously in the AWC neurons to regulate expression of the daf-28 insulin-like peptide and cell-autonomously in the ASI sensory neurons to regulate expression of the growth promoting daf-7 in a food-regulated manner. Plays a role in memory-based thermal response of an individual AFD neuron cell. Involved in chemotaxis response in AWC neurons to attractant 2-heptanone, a volatile organic compound emitted by the nematode pathogenic bacterium B.nematocida B16. Represses transcription of glutamate receptor glr-1 in the nucleus basally and in response to change in synaptic activity.</text>
</comment>
<comment type="catalytic activity">
    <reaction evidence="3">
        <text>L-seryl-[protein] + ATP = O-phospho-L-seryl-[protein] + ADP + H(+)</text>
        <dbReference type="Rhea" id="RHEA:17989"/>
        <dbReference type="Rhea" id="RHEA-COMP:9863"/>
        <dbReference type="Rhea" id="RHEA-COMP:11604"/>
        <dbReference type="ChEBI" id="CHEBI:15378"/>
        <dbReference type="ChEBI" id="CHEBI:29999"/>
        <dbReference type="ChEBI" id="CHEBI:30616"/>
        <dbReference type="ChEBI" id="CHEBI:83421"/>
        <dbReference type="ChEBI" id="CHEBI:456216"/>
        <dbReference type="EC" id="2.7.11.17"/>
    </reaction>
</comment>
<comment type="catalytic activity">
    <reaction evidence="3">
        <text>L-threonyl-[protein] + ATP = O-phospho-L-threonyl-[protein] + ADP + H(+)</text>
        <dbReference type="Rhea" id="RHEA:46608"/>
        <dbReference type="Rhea" id="RHEA-COMP:11060"/>
        <dbReference type="Rhea" id="RHEA-COMP:11605"/>
        <dbReference type="ChEBI" id="CHEBI:15378"/>
        <dbReference type="ChEBI" id="CHEBI:30013"/>
        <dbReference type="ChEBI" id="CHEBI:30616"/>
        <dbReference type="ChEBI" id="CHEBI:61977"/>
        <dbReference type="ChEBI" id="CHEBI:456216"/>
        <dbReference type="EC" id="2.7.11.17"/>
    </reaction>
</comment>
<comment type="cofactor">
    <cofactor evidence="3">
        <name>Mg(2+)</name>
        <dbReference type="ChEBI" id="CHEBI:18420"/>
    </cofactor>
</comment>
<comment type="activity regulation">
    <text evidence="3">Activated by Ca(2+)/calmodulin. Binding of calmodulin results in a conformational change that generates functional binding sites for both substrate and ATP, and thus relieves autoinhibition and lowers the Km of substrate binding. Must be phosphorylated by ckk-1 to be maximally active but this does not appear to be required for activity in AFD neurons.</text>
</comment>
<comment type="subcellular location">
    <subcellularLocation>
        <location evidence="3">Nucleus</location>
    </subcellularLocation>
    <subcellularLocation>
        <location evidence="3">Cytoplasm</location>
    </subcellularLocation>
    <text evidence="3">Localization is regulated by temperature in thermosensory neurons. Localizes to the nucleus upon elevated temperature shift. Translocates from cytoplasm to the nucleus of FLP thermal nociceptors during thermal adaptation. Translocates transiently from cytoplasm to the nucleus of AWC sensory neurons in response to food withdrawal. Prolonged starvation results in cytoplasmic enrichment. The distribution between cytoplasm and nucleus is regulated by synaptic glutamate receptor glr-1 levels in PVC neurons, accumulating in the nucleus with increasing glr-1.</text>
</comment>
<comment type="domain">
    <text evidence="3">The autoinhibitory domain overlaps with the calmodulin binding region and interacts in the inactive folded state with the catalytic domain as a pseudosubstrate.</text>
</comment>
<comment type="similarity">
    <text evidence="4">Belongs to the protein kinase superfamily. CAMK Ser/Thr protein kinase family. CaMK subfamily.</text>
</comment>
<gene>
    <name type="primary">cmk-1</name>
    <name type="ORF">CBG08406</name>
</gene>